<gene>
    <name type="primary">impdh1b</name>
    <name type="ORF">si:dkey-31f5.7</name>
</gene>
<reference key="1">
    <citation type="journal article" date="2013" name="Nature">
        <title>The zebrafish reference genome sequence and its relationship to the human genome.</title>
        <authorList>
            <person name="Howe K."/>
            <person name="Clark M.D."/>
            <person name="Torroja C.F."/>
            <person name="Torrance J."/>
            <person name="Berthelot C."/>
            <person name="Muffato M."/>
            <person name="Collins J.E."/>
            <person name="Humphray S."/>
            <person name="McLaren K."/>
            <person name="Matthews L."/>
            <person name="McLaren S."/>
            <person name="Sealy I."/>
            <person name="Caccamo M."/>
            <person name="Churcher C."/>
            <person name="Scott C."/>
            <person name="Barrett J.C."/>
            <person name="Koch R."/>
            <person name="Rauch G.J."/>
            <person name="White S."/>
            <person name="Chow W."/>
            <person name="Kilian B."/>
            <person name="Quintais L.T."/>
            <person name="Guerra-Assuncao J.A."/>
            <person name="Zhou Y."/>
            <person name="Gu Y."/>
            <person name="Yen J."/>
            <person name="Vogel J.H."/>
            <person name="Eyre T."/>
            <person name="Redmond S."/>
            <person name="Banerjee R."/>
            <person name="Chi J."/>
            <person name="Fu B."/>
            <person name="Langley E."/>
            <person name="Maguire S.F."/>
            <person name="Laird G.K."/>
            <person name="Lloyd D."/>
            <person name="Kenyon E."/>
            <person name="Donaldson S."/>
            <person name="Sehra H."/>
            <person name="Almeida-King J."/>
            <person name="Loveland J."/>
            <person name="Trevanion S."/>
            <person name="Jones M."/>
            <person name="Quail M."/>
            <person name="Willey D."/>
            <person name="Hunt A."/>
            <person name="Burton J."/>
            <person name="Sims S."/>
            <person name="McLay K."/>
            <person name="Plumb B."/>
            <person name="Davis J."/>
            <person name="Clee C."/>
            <person name="Oliver K."/>
            <person name="Clark R."/>
            <person name="Riddle C."/>
            <person name="Elliot D."/>
            <person name="Threadgold G."/>
            <person name="Harden G."/>
            <person name="Ware D."/>
            <person name="Begum S."/>
            <person name="Mortimore B."/>
            <person name="Kerry G."/>
            <person name="Heath P."/>
            <person name="Phillimore B."/>
            <person name="Tracey A."/>
            <person name="Corby N."/>
            <person name="Dunn M."/>
            <person name="Johnson C."/>
            <person name="Wood J."/>
            <person name="Clark S."/>
            <person name="Pelan S."/>
            <person name="Griffiths G."/>
            <person name="Smith M."/>
            <person name="Glithero R."/>
            <person name="Howden P."/>
            <person name="Barker N."/>
            <person name="Lloyd C."/>
            <person name="Stevens C."/>
            <person name="Harley J."/>
            <person name="Holt K."/>
            <person name="Panagiotidis G."/>
            <person name="Lovell J."/>
            <person name="Beasley H."/>
            <person name="Henderson C."/>
            <person name="Gordon D."/>
            <person name="Auger K."/>
            <person name="Wright D."/>
            <person name="Collins J."/>
            <person name="Raisen C."/>
            <person name="Dyer L."/>
            <person name="Leung K."/>
            <person name="Robertson L."/>
            <person name="Ambridge K."/>
            <person name="Leongamornlert D."/>
            <person name="McGuire S."/>
            <person name="Gilderthorp R."/>
            <person name="Griffiths C."/>
            <person name="Manthravadi D."/>
            <person name="Nichol S."/>
            <person name="Barker G."/>
            <person name="Whitehead S."/>
            <person name="Kay M."/>
            <person name="Brown J."/>
            <person name="Murnane C."/>
            <person name="Gray E."/>
            <person name="Humphries M."/>
            <person name="Sycamore N."/>
            <person name="Barker D."/>
            <person name="Saunders D."/>
            <person name="Wallis J."/>
            <person name="Babbage A."/>
            <person name="Hammond S."/>
            <person name="Mashreghi-Mohammadi M."/>
            <person name="Barr L."/>
            <person name="Martin S."/>
            <person name="Wray P."/>
            <person name="Ellington A."/>
            <person name="Matthews N."/>
            <person name="Ellwood M."/>
            <person name="Woodmansey R."/>
            <person name="Clark G."/>
            <person name="Cooper J."/>
            <person name="Tromans A."/>
            <person name="Grafham D."/>
            <person name="Skuce C."/>
            <person name="Pandian R."/>
            <person name="Andrews R."/>
            <person name="Harrison E."/>
            <person name="Kimberley A."/>
            <person name="Garnett J."/>
            <person name="Fosker N."/>
            <person name="Hall R."/>
            <person name="Garner P."/>
            <person name="Kelly D."/>
            <person name="Bird C."/>
            <person name="Palmer S."/>
            <person name="Gehring I."/>
            <person name="Berger A."/>
            <person name="Dooley C.M."/>
            <person name="Ersan-Urun Z."/>
            <person name="Eser C."/>
            <person name="Geiger H."/>
            <person name="Geisler M."/>
            <person name="Karotki L."/>
            <person name="Kirn A."/>
            <person name="Konantz J."/>
            <person name="Konantz M."/>
            <person name="Oberlander M."/>
            <person name="Rudolph-Geiger S."/>
            <person name="Teucke M."/>
            <person name="Lanz C."/>
            <person name="Raddatz G."/>
            <person name="Osoegawa K."/>
            <person name="Zhu B."/>
            <person name="Rapp A."/>
            <person name="Widaa S."/>
            <person name="Langford C."/>
            <person name="Yang F."/>
            <person name="Schuster S.C."/>
            <person name="Carter N.P."/>
            <person name="Harrow J."/>
            <person name="Ning Z."/>
            <person name="Herrero J."/>
            <person name="Searle S.M."/>
            <person name="Enright A."/>
            <person name="Geisler R."/>
            <person name="Plasterk R.H."/>
            <person name="Lee C."/>
            <person name="Westerfield M."/>
            <person name="de Jong P.J."/>
            <person name="Zon L.I."/>
            <person name="Postlethwait J.H."/>
            <person name="Nusslein-Volhard C."/>
            <person name="Hubbard T.J."/>
            <person name="Roest Crollius H."/>
            <person name="Rogers J."/>
            <person name="Stemple D.L."/>
        </authorList>
    </citation>
    <scope>NUCLEOTIDE SEQUENCE [LARGE SCALE GENOMIC DNA]</scope>
    <source>
        <strain>Tuebingen</strain>
    </source>
</reference>
<reference key="2">
    <citation type="submission" date="2005-03" db="EMBL/GenBank/DDBJ databases">
        <authorList>
            <consortium name="NIH - Zebrafish Gene Collection (ZGC) project"/>
        </authorList>
    </citation>
    <scope>NUCLEOTIDE SEQUENCE [LARGE SCALE MRNA]</scope>
    <source>
        <tissue>Embryo</tissue>
    </source>
</reference>
<sequence length="514" mass="55641">MADYLISGGTGYIPDDGLSAQQLFAVGDGLTYNDFLILPGFIDFTSDEVDLTSALTKKITLKTPLISSPMDTVTESSMAIAMALMGGIGIIHHNCTPEFQANEVRKVKRFEQGFITDPVVLSPHHTVGDVLEAKVRHGFSGIPITETGKMGSKLVGIVTSRDIDFLSEKDNNKYLEEAMTKREDLVVAPAGVTLKEANDILQRSKKGKLPIVNDKDELVAIIARTDLKKNRDYPLASKDSRKQLLCGAAIGTREDDKYRLDLLTQSGVDMVVLDSSQGNSVYQINMIHYIKQKYPELQVVGGNVVTAAQAKNLIDAGVDALRVGMGCGSICITQEVMACGRPQGTSVYKVAEYARRFGVPVIADGGIQTVGHVVKALSLGASTVMMGSLLAATTEAPGEYFFSDGVRLKKYRGMGSLDAMEKNTSSQKRYFSEGDKVKVAQGVSGSVQDKGSIHKFVPYLIAGIQHGCQDIGAKSLSVLRSMMYSGELKFEKRTMSAQVEGGVHGLHSFEKRLY</sequence>
<accession>Q5RGV1</accession>
<name>IMDH3_DANRE</name>
<evidence type="ECO:0000255" key="1">
    <source>
        <dbReference type="HAMAP-Rule" id="MF_03156"/>
    </source>
</evidence>
<keyword id="KW-0129">CBS domain</keyword>
<keyword id="KW-0963">Cytoplasm</keyword>
<keyword id="KW-0332">GMP biosynthesis</keyword>
<keyword id="KW-0479">Metal-binding</keyword>
<keyword id="KW-0520">NAD</keyword>
<keyword id="KW-0539">Nucleus</keyword>
<keyword id="KW-0560">Oxidoreductase</keyword>
<keyword id="KW-0630">Potassium</keyword>
<keyword id="KW-0658">Purine biosynthesis</keyword>
<keyword id="KW-1185">Reference proteome</keyword>
<keyword id="KW-0677">Repeat</keyword>
<organism>
    <name type="scientific">Danio rerio</name>
    <name type="common">Zebrafish</name>
    <name type="synonym">Brachydanio rerio</name>
    <dbReference type="NCBI Taxonomy" id="7955"/>
    <lineage>
        <taxon>Eukaryota</taxon>
        <taxon>Metazoa</taxon>
        <taxon>Chordata</taxon>
        <taxon>Craniata</taxon>
        <taxon>Vertebrata</taxon>
        <taxon>Euteleostomi</taxon>
        <taxon>Actinopterygii</taxon>
        <taxon>Neopterygii</taxon>
        <taxon>Teleostei</taxon>
        <taxon>Ostariophysi</taxon>
        <taxon>Cypriniformes</taxon>
        <taxon>Danionidae</taxon>
        <taxon>Danioninae</taxon>
        <taxon>Danio</taxon>
    </lineage>
</organism>
<dbReference type="EC" id="1.1.1.205" evidence="1"/>
<dbReference type="EMBL" id="BX649534">
    <property type="protein sequence ID" value="CAI21139.1"/>
    <property type="molecule type" value="Genomic_DNA"/>
</dbReference>
<dbReference type="EMBL" id="BC091790">
    <property type="protein sequence ID" value="AAH91790.1"/>
    <property type="molecule type" value="mRNA"/>
</dbReference>
<dbReference type="RefSeq" id="NP_001014391.1">
    <property type="nucleotide sequence ID" value="NM_001014369.2"/>
</dbReference>
<dbReference type="SMR" id="Q5RGV1"/>
<dbReference type="FunCoup" id="Q5RGV1">
    <property type="interactions" value="865"/>
</dbReference>
<dbReference type="STRING" id="7955.ENSDARP00000066974"/>
<dbReference type="PaxDb" id="7955-ENSDARP00000066972"/>
<dbReference type="Ensembl" id="ENSDART00000066975">
    <property type="protein sequence ID" value="ENSDARP00000066974"/>
    <property type="gene ID" value="ENSDARG00000029524"/>
</dbReference>
<dbReference type="GeneID" id="338306"/>
<dbReference type="KEGG" id="dre:338306"/>
<dbReference type="AGR" id="ZFIN:ZDB-GENE-030219-206"/>
<dbReference type="CTD" id="338306"/>
<dbReference type="ZFIN" id="ZDB-GENE-030219-206">
    <property type="gene designation" value="impdh1b"/>
</dbReference>
<dbReference type="eggNOG" id="KOG2550">
    <property type="taxonomic scope" value="Eukaryota"/>
</dbReference>
<dbReference type="HOGENOM" id="CLU_022552_2_1_1"/>
<dbReference type="InParanoid" id="Q5RGV1"/>
<dbReference type="OrthoDB" id="416622at2759"/>
<dbReference type="PhylomeDB" id="Q5RGV1"/>
<dbReference type="UniPathway" id="UPA00601">
    <property type="reaction ID" value="UER00295"/>
</dbReference>
<dbReference type="PRO" id="PR:Q5RGV1"/>
<dbReference type="Proteomes" id="UP000000437">
    <property type="component" value="Chromosome 4"/>
</dbReference>
<dbReference type="Bgee" id="ENSDARG00000029524">
    <property type="expression patterns" value="Expressed in swim bladder and 33 other cell types or tissues"/>
</dbReference>
<dbReference type="ExpressionAtlas" id="Q5RGV1">
    <property type="expression patterns" value="baseline and differential"/>
</dbReference>
<dbReference type="GO" id="GO:0005737">
    <property type="term" value="C:cytoplasm"/>
    <property type="evidence" value="ECO:0000318"/>
    <property type="project" value="GO_Central"/>
</dbReference>
<dbReference type="GO" id="GO:0005634">
    <property type="term" value="C:nucleus"/>
    <property type="evidence" value="ECO:0007669"/>
    <property type="project" value="UniProtKB-SubCell"/>
</dbReference>
<dbReference type="GO" id="GO:0003938">
    <property type="term" value="F:IMP dehydrogenase activity"/>
    <property type="evidence" value="ECO:0000318"/>
    <property type="project" value="GO_Central"/>
</dbReference>
<dbReference type="GO" id="GO:0046872">
    <property type="term" value="F:metal ion binding"/>
    <property type="evidence" value="ECO:0007669"/>
    <property type="project" value="UniProtKB-UniRule"/>
</dbReference>
<dbReference type="GO" id="GO:0000166">
    <property type="term" value="F:nucleotide binding"/>
    <property type="evidence" value="ECO:0007669"/>
    <property type="project" value="UniProtKB-UniRule"/>
</dbReference>
<dbReference type="GO" id="GO:0006177">
    <property type="term" value="P:GMP biosynthetic process"/>
    <property type="evidence" value="ECO:0007669"/>
    <property type="project" value="UniProtKB-UniRule"/>
</dbReference>
<dbReference type="GO" id="GO:0006183">
    <property type="term" value="P:GTP biosynthetic process"/>
    <property type="evidence" value="ECO:0000318"/>
    <property type="project" value="GO_Central"/>
</dbReference>
<dbReference type="CDD" id="cd04601">
    <property type="entry name" value="CBS_pair_IMPDH"/>
    <property type="match status" value="1"/>
</dbReference>
<dbReference type="CDD" id="cd00381">
    <property type="entry name" value="IMPDH"/>
    <property type="match status" value="1"/>
</dbReference>
<dbReference type="FunFam" id="3.20.20.70:FF:000007">
    <property type="entry name" value="Chromosome 19 SCAF14664, whole genome shotgun sequence"/>
    <property type="match status" value="1"/>
</dbReference>
<dbReference type="Gene3D" id="3.20.20.70">
    <property type="entry name" value="Aldolase class I"/>
    <property type="match status" value="1"/>
</dbReference>
<dbReference type="HAMAP" id="MF_01964">
    <property type="entry name" value="IMPDH"/>
    <property type="match status" value="1"/>
</dbReference>
<dbReference type="InterPro" id="IPR013785">
    <property type="entry name" value="Aldolase_TIM"/>
</dbReference>
<dbReference type="InterPro" id="IPR000644">
    <property type="entry name" value="CBS_dom"/>
</dbReference>
<dbReference type="InterPro" id="IPR005990">
    <property type="entry name" value="IMP_DH"/>
</dbReference>
<dbReference type="InterPro" id="IPR015875">
    <property type="entry name" value="IMP_DH/GMP_Rdtase_CS"/>
</dbReference>
<dbReference type="InterPro" id="IPR001093">
    <property type="entry name" value="IMP_DH_GMPRt"/>
</dbReference>
<dbReference type="NCBIfam" id="TIGR01302">
    <property type="entry name" value="IMP_dehydrog"/>
    <property type="match status" value="1"/>
</dbReference>
<dbReference type="PANTHER" id="PTHR11911:SF129">
    <property type="entry name" value="INOSINE-5'-MONOPHOSPHATE DEHYDROGENASE 1B"/>
    <property type="match status" value="1"/>
</dbReference>
<dbReference type="PANTHER" id="PTHR11911">
    <property type="entry name" value="INOSINE-5-MONOPHOSPHATE DEHYDROGENASE RELATED"/>
    <property type="match status" value="1"/>
</dbReference>
<dbReference type="Pfam" id="PF00571">
    <property type="entry name" value="CBS"/>
    <property type="match status" value="2"/>
</dbReference>
<dbReference type="Pfam" id="PF00478">
    <property type="entry name" value="IMPDH"/>
    <property type="match status" value="1"/>
</dbReference>
<dbReference type="PIRSF" id="PIRSF000130">
    <property type="entry name" value="IMPDH"/>
    <property type="match status" value="1"/>
</dbReference>
<dbReference type="SMART" id="SM00116">
    <property type="entry name" value="CBS"/>
    <property type="match status" value="2"/>
</dbReference>
<dbReference type="SMART" id="SM01240">
    <property type="entry name" value="IMPDH"/>
    <property type="match status" value="1"/>
</dbReference>
<dbReference type="SUPFAM" id="SSF51412">
    <property type="entry name" value="Inosine monophosphate dehydrogenase (IMPDH)"/>
    <property type="match status" value="2"/>
</dbReference>
<dbReference type="PROSITE" id="PS51371">
    <property type="entry name" value="CBS"/>
    <property type="match status" value="2"/>
</dbReference>
<dbReference type="PROSITE" id="PS00487">
    <property type="entry name" value="IMP_DH_GMP_RED"/>
    <property type="match status" value="1"/>
</dbReference>
<proteinExistence type="evidence at transcript level"/>
<protein>
    <recommendedName>
        <fullName evidence="1">Inosine-5'-monophosphate dehydrogenase 1b</fullName>
        <shortName evidence="1">IMP dehydrogenase 1b</shortName>
        <shortName evidence="1">IMPD 1b</shortName>
        <shortName evidence="1">IMPDH 1b</shortName>
        <ecNumber evidence="1">1.1.1.205</ecNumber>
    </recommendedName>
</protein>
<feature type="chain" id="PRO_0000415677" description="Inosine-5'-monophosphate dehydrogenase 1b">
    <location>
        <begin position="1"/>
        <end position="514"/>
    </location>
</feature>
<feature type="domain" description="CBS 1" evidence="1">
    <location>
        <begin position="114"/>
        <end position="174"/>
    </location>
</feature>
<feature type="domain" description="CBS 2" evidence="1">
    <location>
        <begin position="179"/>
        <end position="237"/>
    </location>
</feature>
<feature type="active site" description="Thioimidate intermediate" evidence="1">
    <location>
        <position position="331"/>
    </location>
</feature>
<feature type="active site" description="Proton acceptor" evidence="1">
    <location>
        <position position="429"/>
    </location>
</feature>
<feature type="binding site" evidence="1">
    <location>
        <begin position="274"/>
        <end position="276"/>
    </location>
    <ligand>
        <name>NAD(+)</name>
        <dbReference type="ChEBI" id="CHEBI:57540"/>
    </ligand>
</feature>
<feature type="binding site" evidence="1">
    <location>
        <begin position="324"/>
        <end position="326"/>
    </location>
    <ligand>
        <name>NAD(+)</name>
        <dbReference type="ChEBI" id="CHEBI:57540"/>
    </ligand>
</feature>
<feature type="binding site" description="in other chain" evidence="1">
    <location>
        <position position="326"/>
    </location>
    <ligand>
        <name>K(+)</name>
        <dbReference type="ChEBI" id="CHEBI:29103"/>
        <note>ligand shared between two tetrameric partners</note>
    </ligand>
</feature>
<feature type="binding site" description="in other chain" evidence="1">
    <location>
        <position position="328"/>
    </location>
    <ligand>
        <name>K(+)</name>
        <dbReference type="ChEBI" id="CHEBI:29103"/>
        <note>ligand shared between two tetrameric partners</note>
    </ligand>
</feature>
<feature type="binding site" evidence="1">
    <location>
        <position position="329"/>
    </location>
    <ligand>
        <name>IMP</name>
        <dbReference type="ChEBI" id="CHEBI:58053"/>
    </ligand>
</feature>
<feature type="binding site" description="in other chain" evidence="1">
    <location>
        <position position="331"/>
    </location>
    <ligand>
        <name>K(+)</name>
        <dbReference type="ChEBI" id="CHEBI:29103"/>
        <note>ligand shared between two tetrameric partners</note>
    </ligand>
</feature>
<feature type="binding site" evidence="1">
    <location>
        <begin position="364"/>
        <end position="366"/>
    </location>
    <ligand>
        <name>IMP</name>
        <dbReference type="ChEBI" id="CHEBI:58053"/>
    </ligand>
</feature>
<feature type="binding site" evidence="1">
    <location>
        <begin position="387"/>
        <end position="388"/>
    </location>
    <ligand>
        <name>IMP</name>
        <dbReference type="ChEBI" id="CHEBI:58053"/>
    </ligand>
</feature>
<feature type="binding site" evidence="1">
    <location>
        <begin position="411"/>
        <end position="415"/>
    </location>
    <ligand>
        <name>IMP</name>
        <dbReference type="ChEBI" id="CHEBI:58053"/>
    </ligand>
</feature>
<feature type="binding site" evidence="1">
    <location>
        <position position="441"/>
    </location>
    <ligand>
        <name>IMP</name>
        <dbReference type="ChEBI" id="CHEBI:58053"/>
    </ligand>
</feature>
<feature type="binding site" evidence="1">
    <location>
        <position position="500"/>
    </location>
    <ligand>
        <name>K(+)</name>
        <dbReference type="ChEBI" id="CHEBI:29103"/>
        <note>ligand shared between two tetrameric partners</note>
    </ligand>
</feature>
<feature type="binding site" evidence="1">
    <location>
        <position position="501"/>
    </location>
    <ligand>
        <name>K(+)</name>
        <dbReference type="ChEBI" id="CHEBI:29103"/>
        <note>ligand shared between two tetrameric partners</note>
    </ligand>
</feature>
<feature type="binding site" evidence="1">
    <location>
        <position position="502"/>
    </location>
    <ligand>
        <name>K(+)</name>
        <dbReference type="ChEBI" id="CHEBI:29103"/>
        <note>ligand shared between two tetrameric partners</note>
    </ligand>
</feature>
<comment type="function">
    <text evidence="1">Catalyzes the conversion of inosine 5'-phosphate (IMP) to xanthosine 5'-phosphate (XMP), the first committed and rate-limiting step in the de novo synthesis of guanine nucleotides, and therefore plays an important role in the regulation of cell growth.</text>
</comment>
<comment type="catalytic activity">
    <reaction evidence="1">
        <text>IMP + NAD(+) + H2O = XMP + NADH + H(+)</text>
        <dbReference type="Rhea" id="RHEA:11708"/>
        <dbReference type="ChEBI" id="CHEBI:15377"/>
        <dbReference type="ChEBI" id="CHEBI:15378"/>
        <dbReference type="ChEBI" id="CHEBI:57464"/>
        <dbReference type="ChEBI" id="CHEBI:57540"/>
        <dbReference type="ChEBI" id="CHEBI:57945"/>
        <dbReference type="ChEBI" id="CHEBI:58053"/>
        <dbReference type="EC" id="1.1.1.205"/>
    </reaction>
</comment>
<comment type="cofactor">
    <cofactor evidence="1">
        <name>K(+)</name>
        <dbReference type="ChEBI" id="CHEBI:29103"/>
    </cofactor>
</comment>
<comment type="activity regulation">
    <text evidence="1">Mycophenolic acid (MPA) is a non-competitive inhibitor that prevents formation of the closed enzyme conformation by binding to the same site as the amobile flap. In contrast, mizoribine monophosphate (MZP) is a competitive inhibitor that induces the closed conformation. MPA is a potent inhibitor of mammalian IMPDHs but a poor inhibitor of the bacterial enzymes. MZP is a more potent inhibitor of bacterial IMPDH.</text>
</comment>
<comment type="pathway">
    <text evidence="1">Purine metabolism; XMP biosynthesis via de novo pathway; XMP from IMP: step 1/1.</text>
</comment>
<comment type="subunit">
    <text evidence="1">Homotetramer.</text>
</comment>
<comment type="subcellular location">
    <subcellularLocation>
        <location evidence="1">Cytoplasm</location>
    </subcellularLocation>
    <subcellularLocation>
        <location evidence="1">Nucleus</location>
    </subcellularLocation>
</comment>
<comment type="similarity">
    <text evidence="1">Belongs to the IMPDH/GMPR family.</text>
</comment>